<gene>
    <name evidence="1" type="primary">atg26</name>
    <name type="ORF">ATEG_05690</name>
</gene>
<protein>
    <recommendedName>
        <fullName evidence="6">Sterol 3-beta-glucosyltransferase</fullName>
        <ecNumber evidence="1">2.4.1.-</ecNumber>
        <ecNumber evidence="1">2.4.1.173</ecNumber>
    </recommendedName>
    <alternativeName>
        <fullName evidence="1">Autophagy-related protein 26</fullName>
    </alternativeName>
</protein>
<comment type="function">
    <text evidence="1">Sterol glycosyltransferase responsible for the glycosylation of ergosterol to form ergosterol-glucoside.</text>
</comment>
<comment type="catalytic activity">
    <reaction evidence="1">
        <text>a sterol + UDP-alpha-D-glucose = a sterol 3-beta-D-glucoside + UDP + H(+)</text>
        <dbReference type="Rhea" id="RHEA:22724"/>
        <dbReference type="ChEBI" id="CHEBI:15378"/>
        <dbReference type="ChEBI" id="CHEBI:15889"/>
        <dbReference type="ChEBI" id="CHEBI:37424"/>
        <dbReference type="ChEBI" id="CHEBI:58223"/>
        <dbReference type="ChEBI" id="CHEBI:58885"/>
        <dbReference type="EC" id="2.4.1.173"/>
    </reaction>
    <physiologicalReaction direction="left-to-right" evidence="1">
        <dbReference type="Rhea" id="RHEA:22725"/>
    </physiologicalReaction>
</comment>
<comment type="catalytic activity">
    <reaction evidence="1">
        <text>ergosterol + UDP-alpha-D-glucose = ergosteryl 3-beta-D-glucoside + UDP + H(+)</text>
        <dbReference type="Rhea" id="RHEA:61836"/>
        <dbReference type="ChEBI" id="CHEBI:15378"/>
        <dbReference type="ChEBI" id="CHEBI:16933"/>
        <dbReference type="ChEBI" id="CHEBI:52973"/>
        <dbReference type="ChEBI" id="CHEBI:58223"/>
        <dbReference type="ChEBI" id="CHEBI:58885"/>
    </reaction>
    <physiologicalReaction direction="left-to-right" evidence="1">
        <dbReference type="Rhea" id="RHEA:61837"/>
    </physiologicalReaction>
</comment>
<comment type="subcellular location">
    <subcellularLocation>
        <location evidence="1">Cytoplasm</location>
    </subcellularLocation>
    <subcellularLocation>
        <location evidence="2">Preautophagosomal structure membrane</location>
        <topology evidence="2">Peripheral membrane protein</topology>
    </subcellularLocation>
</comment>
<comment type="domain">
    <text evidence="2">The GRAM and PH domains are required for the localization of ATG26 to the preautophagosomal structure (PAS) and are involved in autophagy (By similarity).</text>
</comment>
<comment type="similarity">
    <text evidence="6">Belongs to the glycosyltransferase 28 family.</text>
</comment>
<evidence type="ECO:0000250" key="1">
    <source>
        <dbReference type="UniProtKB" id="Q06321"/>
    </source>
</evidence>
<evidence type="ECO:0000250" key="2">
    <source>
        <dbReference type="UniProtKB" id="Q2U0C3"/>
    </source>
</evidence>
<evidence type="ECO:0000255" key="3"/>
<evidence type="ECO:0000255" key="4">
    <source>
        <dbReference type="PROSITE-ProRule" id="PRU00145"/>
    </source>
</evidence>
<evidence type="ECO:0000256" key="5">
    <source>
        <dbReference type="SAM" id="MobiDB-lite"/>
    </source>
</evidence>
<evidence type="ECO:0000305" key="6"/>
<keyword id="KW-0072">Autophagy</keyword>
<keyword id="KW-0963">Cytoplasm</keyword>
<keyword id="KW-0328">Glycosyltransferase</keyword>
<keyword id="KW-0444">Lipid biosynthesis</keyword>
<keyword id="KW-0443">Lipid metabolism</keyword>
<keyword id="KW-0472">Membrane</keyword>
<keyword id="KW-0653">Protein transport</keyword>
<keyword id="KW-1185">Reference proteome</keyword>
<keyword id="KW-0677">Repeat</keyword>
<keyword id="KW-0752">Steroid biosynthesis</keyword>
<keyword id="KW-0753">Steroid metabolism</keyword>
<keyword id="KW-0756">Sterol biosynthesis</keyword>
<keyword id="KW-1207">Sterol metabolism</keyword>
<keyword id="KW-0808">Transferase</keyword>
<keyword id="KW-0813">Transport</keyword>
<feature type="chain" id="PRO_0000318043" description="Sterol 3-beta-glucosyltransferase">
    <location>
        <begin position="1"/>
        <end position="1396"/>
    </location>
</feature>
<feature type="domain" description="GRAM 1" evidence="3">
    <location>
        <begin position="237"/>
        <end position="288"/>
    </location>
</feature>
<feature type="domain" description="PH" evidence="4">
    <location>
        <begin position="289"/>
        <end position="387"/>
    </location>
</feature>
<feature type="domain" description="GRAM 2" evidence="3">
    <location>
        <begin position="719"/>
        <end position="785"/>
    </location>
</feature>
<feature type="region of interest" description="Disordered" evidence="5">
    <location>
        <begin position="1"/>
        <end position="59"/>
    </location>
</feature>
<feature type="region of interest" description="Disordered" evidence="5">
    <location>
        <begin position="82"/>
        <end position="193"/>
    </location>
</feature>
<feature type="region of interest" description="Disordered" evidence="5">
    <location>
        <begin position="206"/>
        <end position="233"/>
    </location>
</feature>
<feature type="region of interest" description="Disordered" evidence="5">
    <location>
        <begin position="459"/>
        <end position="531"/>
    </location>
</feature>
<feature type="region of interest" description="Disordered" evidence="5">
    <location>
        <begin position="576"/>
        <end position="635"/>
    </location>
</feature>
<feature type="region of interest" description="Disordered" evidence="5">
    <location>
        <begin position="841"/>
        <end position="880"/>
    </location>
</feature>
<feature type="compositionally biased region" description="Basic and acidic residues" evidence="5">
    <location>
        <begin position="1"/>
        <end position="16"/>
    </location>
</feature>
<feature type="compositionally biased region" description="Polar residues" evidence="5">
    <location>
        <begin position="18"/>
        <end position="28"/>
    </location>
</feature>
<feature type="compositionally biased region" description="Basic and acidic residues" evidence="5">
    <location>
        <begin position="35"/>
        <end position="44"/>
    </location>
</feature>
<feature type="compositionally biased region" description="Basic and acidic residues" evidence="5">
    <location>
        <begin position="82"/>
        <end position="108"/>
    </location>
</feature>
<feature type="compositionally biased region" description="Polar residues" evidence="5">
    <location>
        <begin position="156"/>
        <end position="175"/>
    </location>
</feature>
<feature type="compositionally biased region" description="Polar residues" evidence="5">
    <location>
        <begin position="459"/>
        <end position="479"/>
    </location>
</feature>
<feature type="compositionally biased region" description="Polar residues" evidence="5">
    <location>
        <begin position="487"/>
        <end position="497"/>
    </location>
</feature>
<feature type="compositionally biased region" description="Basic and acidic residues" evidence="5">
    <location>
        <begin position="585"/>
        <end position="595"/>
    </location>
</feature>
<feature type="compositionally biased region" description="Basic and acidic residues" evidence="5">
    <location>
        <begin position="846"/>
        <end position="862"/>
    </location>
</feature>
<feature type="binding site" evidence="1">
    <location>
        <position position="907"/>
    </location>
    <ligand>
        <name>UDP-alpha-D-glucose</name>
        <dbReference type="ChEBI" id="CHEBI:58885"/>
    </ligand>
</feature>
<feature type="binding site" evidence="1">
    <location>
        <position position="908"/>
    </location>
    <ligand>
        <name>UDP-alpha-D-glucose</name>
        <dbReference type="ChEBI" id="CHEBI:58885"/>
    </ligand>
</feature>
<feature type="binding site" evidence="1">
    <location>
        <position position="910"/>
    </location>
    <ligand>
        <name>UDP-alpha-D-glucose</name>
        <dbReference type="ChEBI" id="CHEBI:58885"/>
    </ligand>
</feature>
<feature type="binding site" evidence="1">
    <location>
        <position position="1210"/>
    </location>
    <ligand>
        <name>UDP-alpha-D-glucose</name>
        <dbReference type="ChEBI" id="CHEBI:58885"/>
    </ligand>
</feature>
<feature type="binding site" evidence="1">
    <location>
        <position position="1212"/>
    </location>
    <ligand>
        <name>UDP-alpha-D-glucose</name>
        <dbReference type="ChEBI" id="CHEBI:58885"/>
    </ligand>
</feature>
<feature type="binding site" evidence="1">
    <location>
        <position position="1225"/>
    </location>
    <ligand>
        <name>UDP-alpha-D-glucose</name>
        <dbReference type="ChEBI" id="CHEBI:58885"/>
    </ligand>
</feature>
<feature type="binding site" evidence="1">
    <location>
        <position position="1229"/>
    </location>
    <ligand>
        <name>UDP-alpha-D-glucose</name>
        <dbReference type="ChEBI" id="CHEBI:58885"/>
    </ligand>
</feature>
<feature type="binding site" evidence="1">
    <location>
        <position position="1230"/>
    </location>
    <ligand>
        <name>UDP-alpha-D-glucose</name>
        <dbReference type="ChEBI" id="CHEBI:58885"/>
    </ligand>
</feature>
<feature type="binding site" evidence="1">
    <location>
        <position position="1249"/>
    </location>
    <ligand>
        <name>UDP-alpha-D-glucose</name>
        <dbReference type="ChEBI" id="CHEBI:58885"/>
    </ligand>
</feature>
<feature type="binding site" evidence="1">
    <location>
        <position position="1250"/>
    </location>
    <ligand>
        <name>UDP-alpha-D-glucose</name>
        <dbReference type="ChEBI" id="CHEBI:58885"/>
    </ligand>
</feature>
<dbReference type="EC" id="2.4.1.-" evidence="1"/>
<dbReference type="EC" id="2.4.1.173" evidence="1"/>
<dbReference type="EMBL" id="CH476601">
    <property type="protein sequence ID" value="EAU33451.1"/>
    <property type="molecule type" value="Genomic_DNA"/>
</dbReference>
<dbReference type="RefSeq" id="XP_001214868.1">
    <property type="nucleotide sequence ID" value="XM_001214868.1"/>
</dbReference>
<dbReference type="SMR" id="Q0CKU4"/>
<dbReference type="STRING" id="341663.Q0CKU4"/>
<dbReference type="EnsemblFungi" id="EAU33451">
    <property type="protein sequence ID" value="EAU33451"/>
    <property type="gene ID" value="ATEG_05690"/>
</dbReference>
<dbReference type="GeneID" id="4321815"/>
<dbReference type="VEuPathDB" id="FungiDB:ATEG_05690"/>
<dbReference type="eggNOG" id="KOG1192">
    <property type="taxonomic scope" value="Eukaryota"/>
</dbReference>
<dbReference type="HOGENOM" id="CLU_000537_6_0_1"/>
<dbReference type="OMA" id="WRNKTLG"/>
<dbReference type="OrthoDB" id="10261837at2759"/>
<dbReference type="Proteomes" id="UP000007963">
    <property type="component" value="Unassembled WGS sequence"/>
</dbReference>
<dbReference type="GO" id="GO:0034045">
    <property type="term" value="C:phagophore assembly site membrane"/>
    <property type="evidence" value="ECO:0007669"/>
    <property type="project" value="UniProtKB-SubCell"/>
</dbReference>
<dbReference type="GO" id="GO:0016906">
    <property type="term" value="F:sterol 3-beta-glucosyltransferase activity"/>
    <property type="evidence" value="ECO:0007669"/>
    <property type="project" value="UniProtKB-EC"/>
</dbReference>
<dbReference type="GO" id="GO:0006914">
    <property type="term" value="P:autophagy"/>
    <property type="evidence" value="ECO:0007669"/>
    <property type="project" value="UniProtKB-KW"/>
</dbReference>
<dbReference type="GO" id="GO:0005975">
    <property type="term" value="P:carbohydrate metabolic process"/>
    <property type="evidence" value="ECO:0007669"/>
    <property type="project" value="InterPro"/>
</dbReference>
<dbReference type="GO" id="GO:0030259">
    <property type="term" value="P:lipid glycosylation"/>
    <property type="evidence" value="ECO:0007669"/>
    <property type="project" value="InterPro"/>
</dbReference>
<dbReference type="GO" id="GO:0015031">
    <property type="term" value="P:protein transport"/>
    <property type="evidence" value="ECO:0007669"/>
    <property type="project" value="UniProtKB-KW"/>
</dbReference>
<dbReference type="GO" id="GO:0016126">
    <property type="term" value="P:sterol biosynthetic process"/>
    <property type="evidence" value="ECO:0007669"/>
    <property type="project" value="UniProtKB-KW"/>
</dbReference>
<dbReference type="CDD" id="cd03784">
    <property type="entry name" value="GT1_Gtf-like"/>
    <property type="match status" value="1"/>
</dbReference>
<dbReference type="CDD" id="cd13215">
    <property type="entry name" value="PH-GRAM1_AGT26"/>
    <property type="match status" value="1"/>
</dbReference>
<dbReference type="CDD" id="cd13216">
    <property type="entry name" value="PH-GRAM2_AGT26"/>
    <property type="match status" value="1"/>
</dbReference>
<dbReference type="FunFam" id="2.30.29.30:FF:000303">
    <property type="entry name" value="Sterol 3-beta-glucosyltransferase"/>
    <property type="match status" value="1"/>
</dbReference>
<dbReference type="FunFam" id="2.30.29.30:FF:000560">
    <property type="entry name" value="Sterol 3-beta-glucosyltransferase"/>
    <property type="match status" value="1"/>
</dbReference>
<dbReference type="FunFam" id="3.40.50.2000:FF:000029">
    <property type="entry name" value="Sterol 3-beta-glucosyltransferase"/>
    <property type="match status" value="1"/>
</dbReference>
<dbReference type="FunFam" id="3.40.50.2000:FF:000009">
    <property type="entry name" value="Sterol 3-beta-glucosyltransferase UGT80A2"/>
    <property type="match status" value="1"/>
</dbReference>
<dbReference type="Gene3D" id="3.40.50.2000">
    <property type="entry name" value="Glycogen Phosphorylase B"/>
    <property type="match status" value="2"/>
</dbReference>
<dbReference type="Gene3D" id="2.30.29.30">
    <property type="entry name" value="Pleckstrin-homology domain (PH domain)/Phosphotyrosine-binding domain (PTB)"/>
    <property type="match status" value="3"/>
</dbReference>
<dbReference type="InterPro" id="IPR048066">
    <property type="entry name" value="ATG26_PH_GRAM1"/>
</dbReference>
<dbReference type="InterPro" id="IPR048065">
    <property type="entry name" value="ATG26_PH_GRAM2"/>
</dbReference>
<dbReference type="InterPro" id="IPR010610">
    <property type="entry name" value="EryCIII-like_C"/>
</dbReference>
<dbReference type="InterPro" id="IPR050426">
    <property type="entry name" value="Glycosyltransferase_28"/>
</dbReference>
<dbReference type="InterPro" id="IPR004276">
    <property type="entry name" value="GlycoTrans_28_N"/>
</dbReference>
<dbReference type="InterPro" id="IPR004182">
    <property type="entry name" value="GRAM"/>
</dbReference>
<dbReference type="InterPro" id="IPR011993">
    <property type="entry name" value="PH-like_dom_sf"/>
</dbReference>
<dbReference type="InterPro" id="IPR001849">
    <property type="entry name" value="PH_domain"/>
</dbReference>
<dbReference type="InterPro" id="IPR002213">
    <property type="entry name" value="UDP_glucos_trans"/>
</dbReference>
<dbReference type="PANTHER" id="PTHR48050">
    <property type="entry name" value="STEROL 3-BETA-GLUCOSYLTRANSFERASE"/>
    <property type="match status" value="1"/>
</dbReference>
<dbReference type="PANTHER" id="PTHR48050:SF25">
    <property type="entry name" value="STEROL 3-BETA-GLUCOSYLTRANSFERASE"/>
    <property type="match status" value="1"/>
</dbReference>
<dbReference type="Pfam" id="PF06722">
    <property type="entry name" value="EryCIII-like_C"/>
    <property type="match status" value="1"/>
</dbReference>
<dbReference type="Pfam" id="PF03033">
    <property type="entry name" value="Glyco_transf_28"/>
    <property type="match status" value="1"/>
</dbReference>
<dbReference type="Pfam" id="PF02893">
    <property type="entry name" value="GRAM"/>
    <property type="match status" value="2"/>
</dbReference>
<dbReference type="Pfam" id="PF00169">
    <property type="entry name" value="PH"/>
    <property type="match status" value="1"/>
</dbReference>
<dbReference type="SMART" id="SM00568">
    <property type="entry name" value="GRAM"/>
    <property type="match status" value="2"/>
</dbReference>
<dbReference type="SMART" id="SM00233">
    <property type="entry name" value="PH"/>
    <property type="match status" value="1"/>
</dbReference>
<dbReference type="SUPFAM" id="SSF50729">
    <property type="entry name" value="PH domain-like"/>
    <property type="match status" value="1"/>
</dbReference>
<dbReference type="SUPFAM" id="SSF53756">
    <property type="entry name" value="UDP-Glycosyltransferase/glycogen phosphorylase"/>
    <property type="match status" value="1"/>
</dbReference>
<dbReference type="PROSITE" id="PS50003">
    <property type="entry name" value="PH_DOMAIN"/>
    <property type="match status" value="1"/>
</dbReference>
<proteinExistence type="inferred from homology"/>
<organism>
    <name type="scientific">Aspergillus terreus (strain NIH 2624 / FGSC A1156)</name>
    <dbReference type="NCBI Taxonomy" id="341663"/>
    <lineage>
        <taxon>Eukaryota</taxon>
        <taxon>Fungi</taxon>
        <taxon>Dikarya</taxon>
        <taxon>Ascomycota</taxon>
        <taxon>Pezizomycotina</taxon>
        <taxon>Eurotiomycetes</taxon>
        <taxon>Eurotiomycetidae</taxon>
        <taxon>Eurotiales</taxon>
        <taxon>Aspergillaceae</taxon>
        <taxon>Aspergillus</taxon>
        <taxon>Aspergillus subgen. Circumdati</taxon>
    </lineage>
</organism>
<sequence>MRPLLDEAKRRVDRRLSASRQSLSTSRIFPSALPERLKDDHDAQVDYTAPPGGGGTKEGHFQYMQQSIFGMIAAVGSQSDFHARFDDSSDSERDTDRPPQKRTEKESQATDAPPSSKNEKKALRSPQRPKSPSQERGRRHRKTLSGSRILRPLMPGSSQRQGGAQTEPSTGNQMSRVPSPERPRSTTPRAAPVLSRMVEAQALFDSKGSMNQSPRSPPAETQEEQSQEQTSASPLSLRLMEMFGFESPEKVLVEYACSLVQSMLLQGYMYVTEGHICFYAYLPRKSTVAIKSGYLYKRGRKNPKYNRYWFSLKGDVLSYYADPSNLYFPSGHIDLRYGISASLSEPKEKDREARDFQVTTDQRTYYFRADSSTSAKEWVKSLQKVIFRTHNDGDSVKISFPIESIIDIEESPMVDFAETFKIRAIESGETYAIDEYYFSFFNDGQDAFNFVKGLVSESQAKNPSRESPQPGRTTPQSRARGSRARWSLTSGLSQVLGSSDARRRRSASASQFSPGRDAAGLSPTSRQRDLSESFVNSFDQATESSTVLQSMTDTAESASQILNRSDVFQYPAMQPFRRQSLSEDQFGRRHSDETARSTNDIARLGPGITPRDVQRFYPPSDSDHDAQDAARVQQSASSLNELVRAGAYPLQRAAGLAEYLRNRSKQMGTLLASESMGYIEKVSGMWAGGRRHYGEAEGILPDDQDVDPEDKEDGCNHGDRFRAHFALPPTEKLQATYFAYLHRVLPLYGKIYVSQKKLCFRSLLPGTRTKMILPLKDVENVEKEKGFRFGYHGLVVIIRGHEELFFEFNAADVRDDCAVTIHQHLESVRFLSESGMLAEQEQDESEAAKAEHRMLQEARKDASGGLIPQTPSDESPEIHPIFDDPRASIINFKPTESLRITCLTIGSRGDVQPYIALCKGLLAEGHRPKIATHAEFEPWIRKHGIDFAPVEGDPAELMRICVENGMFTYSFLKEASMKFRGWIDDLLSSAWRSCQDSDLLIESPSAMAGIHIAEALRIPYFRAFTMPWTRTRAYPHAFAVPEHKMGGAYNYITYVMFDNVFWKAIAGQVNRWRQSELGLKATNLDKMQPNKVPFLYNYSPSVVVPPLDYPDWIRITGYWFLSEASDWTPPADLMAFIQRARDDGKKLVYIGFGSIVVSDPSALTRTVVESVQKADVRCILSKGWSDRLGDPASVKSEIPLPPEIFQIQAAPHDWLFSQIDAAAHHGGAGTTGASLRAGVPTIVKPFFGDQFFFGTRVEDLGVGICLKRLNVSLFSRALWEATHSERMIVKARNLGQQIRSEDGVATAIQAIYRDLEYAKTLARQRSIVSSTPFSPTPSAKTVAEQEVDDDVTDSEEWTFIGDETDIDISRRVRGRAVSDVDMLPEPLAVRSPELAQ</sequence>
<reference key="1">
    <citation type="submission" date="2005-09" db="EMBL/GenBank/DDBJ databases">
        <title>Annotation of the Aspergillus terreus NIH2624 genome.</title>
        <authorList>
            <person name="Birren B.W."/>
            <person name="Lander E.S."/>
            <person name="Galagan J.E."/>
            <person name="Nusbaum C."/>
            <person name="Devon K."/>
            <person name="Henn M."/>
            <person name="Ma L.-J."/>
            <person name="Jaffe D.B."/>
            <person name="Butler J."/>
            <person name="Alvarez P."/>
            <person name="Gnerre S."/>
            <person name="Grabherr M."/>
            <person name="Kleber M."/>
            <person name="Mauceli E.W."/>
            <person name="Brockman W."/>
            <person name="Rounsley S."/>
            <person name="Young S.K."/>
            <person name="LaButti K."/>
            <person name="Pushparaj V."/>
            <person name="DeCaprio D."/>
            <person name="Crawford M."/>
            <person name="Koehrsen M."/>
            <person name="Engels R."/>
            <person name="Montgomery P."/>
            <person name="Pearson M."/>
            <person name="Howarth C."/>
            <person name="Larson L."/>
            <person name="Luoma S."/>
            <person name="White J."/>
            <person name="Alvarado L."/>
            <person name="Kodira C.D."/>
            <person name="Zeng Q."/>
            <person name="Oleary S."/>
            <person name="Yandava C."/>
            <person name="Denning D.W."/>
            <person name="Nierman W.C."/>
            <person name="Milne T."/>
            <person name="Madden K."/>
        </authorList>
    </citation>
    <scope>NUCLEOTIDE SEQUENCE [LARGE SCALE GENOMIC DNA]</scope>
    <source>
        <strain>NIH 2624 / FGSC A1156</strain>
    </source>
</reference>
<name>ATG26_ASPTN</name>
<accession>Q0CKU4</accession>